<feature type="chain" id="PRO_0000231309" description="Geranylgeranylglyceryl phosphate synthase">
    <location>
        <begin position="1"/>
        <end position="235"/>
    </location>
</feature>
<feature type="binding site" evidence="1">
    <location>
        <position position="13"/>
    </location>
    <ligand>
        <name>sn-glycerol 1-phosphate</name>
        <dbReference type="ChEBI" id="CHEBI:57685"/>
    </ligand>
</feature>
<feature type="binding site" evidence="1">
    <location>
        <position position="15"/>
    </location>
    <ligand>
        <name>Mg(2+)</name>
        <dbReference type="ChEBI" id="CHEBI:18420"/>
    </ligand>
</feature>
<feature type="binding site" evidence="1">
    <location>
        <position position="42"/>
    </location>
    <ligand>
        <name>Mg(2+)</name>
        <dbReference type="ChEBI" id="CHEBI:18420"/>
    </ligand>
</feature>
<feature type="binding site" evidence="1">
    <location>
        <begin position="162"/>
        <end position="167"/>
    </location>
    <ligand>
        <name>sn-glycerol 1-phosphate</name>
        <dbReference type="ChEBI" id="CHEBI:57685"/>
    </ligand>
</feature>
<feature type="binding site" evidence="1">
    <location>
        <position position="192"/>
    </location>
    <ligand>
        <name>sn-glycerol 1-phosphate</name>
        <dbReference type="ChEBI" id="CHEBI:57685"/>
    </ligand>
</feature>
<feature type="binding site" evidence="1">
    <location>
        <begin position="212"/>
        <end position="213"/>
    </location>
    <ligand>
        <name>sn-glycerol 1-phosphate</name>
        <dbReference type="ChEBI" id="CHEBI:57685"/>
    </ligand>
</feature>
<comment type="function">
    <text evidence="1">Prenyltransferase that catalyzes the transfer of the geranylgeranyl moiety of geranylgeranyl diphosphate (GGPP) to the C3 hydroxyl of sn-glycerol-1-phosphate (G1P). This reaction is the first ether-bond-formation step in the biosynthesis of archaeal membrane lipids.</text>
</comment>
<comment type="catalytic activity">
    <reaction evidence="1">
        <text>sn-glycerol 1-phosphate + (2E,6E,10E)-geranylgeranyl diphosphate = sn-3-O-(geranylgeranyl)glycerol 1-phosphate + diphosphate</text>
        <dbReference type="Rhea" id="RHEA:23404"/>
        <dbReference type="ChEBI" id="CHEBI:33019"/>
        <dbReference type="ChEBI" id="CHEBI:57677"/>
        <dbReference type="ChEBI" id="CHEBI:57685"/>
        <dbReference type="ChEBI" id="CHEBI:58756"/>
        <dbReference type="EC" id="2.5.1.41"/>
    </reaction>
</comment>
<comment type="cofactor">
    <cofactor evidence="1">
        <name>Mg(2+)</name>
        <dbReference type="ChEBI" id="CHEBI:18420"/>
    </cofactor>
</comment>
<comment type="pathway">
    <text evidence="1">Membrane lipid metabolism; glycerophospholipid metabolism.</text>
</comment>
<comment type="subcellular location">
    <subcellularLocation>
        <location evidence="1">Cytoplasm</location>
    </subcellularLocation>
</comment>
<comment type="similarity">
    <text evidence="1">Belongs to the GGGP/HepGP synthase family. Group I subfamily.</text>
</comment>
<protein>
    <recommendedName>
        <fullName evidence="1">Geranylgeranylglyceryl phosphate synthase</fullName>
        <shortName evidence="1">GGGP synthase</shortName>
        <shortName evidence="1">GGGPS</shortName>
        <ecNumber evidence="1">2.5.1.41</ecNumber>
    </recommendedName>
    <alternativeName>
        <fullName evidence="1">(S)-3-O-geranylgeranylglyceryl phosphate synthase</fullName>
    </alternativeName>
    <alternativeName>
        <fullName evidence="1">Phosphoglycerol geranylgeranyltransferase</fullName>
    </alternativeName>
</protein>
<accession>Q3IT31</accession>
<organism>
    <name type="scientific">Natronomonas pharaonis (strain ATCC 35678 / DSM 2160 / CIP 103997 / JCM 8858 / NBRC 14720 / NCIMB 2260 / Gabara)</name>
    <name type="common">Halobacterium pharaonis</name>
    <dbReference type="NCBI Taxonomy" id="348780"/>
    <lineage>
        <taxon>Archaea</taxon>
        <taxon>Methanobacteriati</taxon>
        <taxon>Methanobacteriota</taxon>
        <taxon>Stenosarchaea group</taxon>
        <taxon>Halobacteria</taxon>
        <taxon>Halobacteriales</taxon>
        <taxon>Haloarculaceae</taxon>
        <taxon>Natronomonas</taxon>
    </lineage>
</organism>
<gene>
    <name type="ordered locus">NP_1224A</name>
</gene>
<reference key="1">
    <citation type="journal article" date="2005" name="Genome Res.">
        <title>Living with two extremes: conclusions from the genome sequence of Natronomonas pharaonis.</title>
        <authorList>
            <person name="Falb M."/>
            <person name="Pfeiffer F."/>
            <person name="Palm P."/>
            <person name="Rodewald K."/>
            <person name="Hickmann V."/>
            <person name="Tittor J."/>
            <person name="Oesterhelt D."/>
        </authorList>
    </citation>
    <scope>NUCLEOTIDE SEQUENCE [LARGE SCALE GENOMIC DNA]</scope>
    <source>
        <strain>ATCC 35678 / DSM 2160 / CIP 103997 / JCM 8858 / NBRC 14720 / NCIMB 2260 / Gabara</strain>
    </source>
</reference>
<proteinExistence type="inferred from homology"/>
<name>GGGPS_NATPD</name>
<sequence>MSAPWAEWDHIVKIDPDKTLADGETFQDVCATGTDALEIGGTTGMTEEKMARVVEATAAHDIPVYIEPSNVGAVVHDEDLDGYFVPTVLNAGDVFWTTGAHKEWVRLDGDIDWDRTFTEAYIVLNPDASVADYTEADCNLDIDEVAAYAEVAEKMFGQEIVYVEYSGMLGDPEMVQAATDATEEATVFYGGGIRDYESAYTMRQHADTVIVGDLVHDEGADAVRETVDGAKDAAD</sequence>
<keyword id="KW-0963">Cytoplasm</keyword>
<keyword id="KW-0444">Lipid biosynthesis</keyword>
<keyword id="KW-0443">Lipid metabolism</keyword>
<keyword id="KW-0460">Magnesium</keyword>
<keyword id="KW-0479">Metal-binding</keyword>
<keyword id="KW-0594">Phospholipid biosynthesis</keyword>
<keyword id="KW-1208">Phospholipid metabolism</keyword>
<keyword id="KW-1185">Reference proteome</keyword>
<keyword id="KW-0808">Transferase</keyword>
<dbReference type="EC" id="2.5.1.41" evidence="1"/>
<dbReference type="EMBL" id="CR936257">
    <property type="protein sequence ID" value="CAI48703.1"/>
    <property type="molecule type" value="Genomic_DNA"/>
</dbReference>
<dbReference type="RefSeq" id="WP_011322339.1">
    <property type="nucleotide sequence ID" value="NC_007426.1"/>
</dbReference>
<dbReference type="SMR" id="Q3IT31"/>
<dbReference type="STRING" id="348780.NP_1224A"/>
<dbReference type="EnsemblBacteria" id="CAI48703">
    <property type="protein sequence ID" value="CAI48703"/>
    <property type="gene ID" value="NP_1224A"/>
</dbReference>
<dbReference type="GeneID" id="3701088"/>
<dbReference type="KEGG" id="nph:NP_1224A"/>
<dbReference type="eggNOG" id="arCOG01085">
    <property type="taxonomic scope" value="Archaea"/>
</dbReference>
<dbReference type="HOGENOM" id="CLU_095211_0_0_2"/>
<dbReference type="OrthoDB" id="49758at2157"/>
<dbReference type="UniPathway" id="UPA00940"/>
<dbReference type="Proteomes" id="UP000002698">
    <property type="component" value="Chromosome"/>
</dbReference>
<dbReference type="GO" id="GO:0005737">
    <property type="term" value="C:cytoplasm"/>
    <property type="evidence" value="ECO:0007669"/>
    <property type="project" value="UniProtKB-SubCell"/>
</dbReference>
<dbReference type="GO" id="GO:0000287">
    <property type="term" value="F:magnesium ion binding"/>
    <property type="evidence" value="ECO:0007669"/>
    <property type="project" value="UniProtKB-UniRule"/>
</dbReference>
<dbReference type="GO" id="GO:0047294">
    <property type="term" value="F:phosphoglycerol geranylgeranyltransferase activity"/>
    <property type="evidence" value="ECO:0007669"/>
    <property type="project" value="UniProtKB-UniRule"/>
</dbReference>
<dbReference type="GO" id="GO:0046474">
    <property type="term" value="P:glycerophospholipid biosynthetic process"/>
    <property type="evidence" value="ECO:0007669"/>
    <property type="project" value="UniProtKB-UniRule"/>
</dbReference>
<dbReference type="CDD" id="cd02812">
    <property type="entry name" value="PcrB_like"/>
    <property type="match status" value="1"/>
</dbReference>
<dbReference type="Gene3D" id="3.20.20.390">
    <property type="entry name" value="FMN-linked oxidoreductases"/>
    <property type="match status" value="1"/>
</dbReference>
<dbReference type="HAMAP" id="MF_00112">
    <property type="entry name" value="GGGP_HepGP_synthase"/>
    <property type="match status" value="1"/>
</dbReference>
<dbReference type="InterPro" id="IPR039074">
    <property type="entry name" value="GGGP/HepGP_synthase_I"/>
</dbReference>
<dbReference type="InterPro" id="IPR038597">
    <property type="entry name" value="GGGP/HepGP_synthase_sf"/>
</dbReference>
<dbReference type="InterPro" id="IPR008205">
    <property type="entry name" value="GGGP_HepGP_synthase"/>
</dbReference>
<dbReference type="InterPro" id="IPR026417">
    <property type="entry name" value="GGGPS_halobacteria"/>
</dbReference>
<dbReference type="NCBIfam" id="TIGR01768">
    <property type="entry name" value="GGGP-family"/>
    <property type="match status" value="1"/>
</dbReference>
<dbReference type="NCBIfam" id="TIGR04147">
    <property type="entry name" value="GGGPS_Halobact"/>
    <property type="match status" value="1"/>
</dbReference>
<dbReference type="NCBIfam" id="NF003199">
    <property type="entry name" value="PRK04169.1-3"/>
    <property type="match status" value="1"/>
</dbReference>
<dbReference type="PANTHER" id="PTHR40029">
    <property type="match status" value="1"/>
</dbReference>
<dbReference type="PANTHER" id="PTHR40029:SF2">
    <property type="entry name" value="HEPTAPRENYLGLYCERYL PHOSPHATE SYNTHASE"/>
    <property type="match status" value="1"/>
</dbReference>
<dbReference type="Pfam" id="PF01884">
    <property type="entry name" value="PcrB"/>
    <property type="match status" value="1"/>
</dbReference>
<dbReference type="SUPFAM" id="SSF51395">
    <property type="entry name" value="FMN-linked oxidoreductases"/>
    <property type="match status" value="1"/>
</dbReference>
<evidence type="ECO:0000255" key="1">
    <source>
        <dbReference type="HAMAP-Rule" id="MF_00112"/>
    </source>
</evidence>